<dbReference type="EC" id="2.7.1.36" evidence="8"/>
<dbReference type="EMBL" id="HG970334">
    <property type="protein sequence ID" value="CEF86838.1"/>
    <property type="molecule type" value="Genomic_DNA"/>
</dbReference>
<dbReference type="RefSeq" id="XP_011324521.1">
    <property type="nucleotide sequence ID" value="XM_011326219.1"/>
</dbReference>
<dbReference type="SMR" id="I1RPE5"/>
<dbReference type="FunCoup" id="I1RPE5">
    <property type="interactions" value="457"/>
</dbReference>
<dbReference type="STRING" id="229533.I1RPE5"/>
<dbReference type="KEGG" id="fgr:FGSG_05912"/>
<dbReference type="VEuPathDB" id="FungiDB:FGRAMPH1_01G19063"/>
<dbReference type="eggNOG" id="KOG1511">
    <property type="taxonomic scope" value="Eukaryota"/>
</dbReference>
<dbReference type="HOGENOM" id="CLU_017814_1_0_1"/>
<dbReference type="InParanoid" id="I1RPE5"/>
<dbReference type="OrthoDB" id="112733at110618"/>
<dbReference type="UniPathway" id="UPA00057">
    <property type="reaction ID" value="UER00098"/>
</dbReference>
<dbReference type="Proteomes" id="UP000070720">
    <property type="component" value="Chromosome 3"/>
</dbReference>
<dbReference type="GO" id="GO:0005829">
    <property type="term" value="C:cytosol"/>
    <property type="evidence" value="ECO:0007669"/>
    <property type="project" value="UniProtKB-SubCell"/>
</dbReference>
<dbReference type="GO" id="GO:0005524">
    <property type="term" value="F:ATP binding"/>
    <property type="evidence" value="ECO:0007669"/>
    <property type="project" value="UniProtKB-KW"/>
</dbReference>
<dbReference type="GO" id="GO:0046872">
    <property type="term" value="F:metal ion binding"/>
    <property type="evidence" value="ECO:0007669"/>
    <property type="project" value="UniProtKB-KW"/>
</dbReference>
<dbReference type="GO" id="GO:0004496">
    <property type="term" value="F:mevalonate kinase activity"/>
    <property type="evidence" value="ECO:0007669"/>
    <property type="project" value="UniProtKB-EC"/>
</dbReference>
<dbReference type="GO" id="GO:0006696">
    <property type="term" value="P:ergosterol biosynthetic process"/>
    <property type="evidence" value="ECO:0007669"/>
    <property type="project" value="TreeGrafter"/>
</dbReference>
<dbReference type="GO" id="GO:0019287">
    <property type="term" value="P:isopentenyl diphosphate biosynthetic process, mevalonate pathway"/>
    <property type="evidence" value="ECO:0007669"/>
    <property type="project" value="UniProtKB-UniPathway"/>
</dbReference>
<dbReference type="FunFam" id="3.30.230.10:FF:000027">
    <property type="entry name" value="Mevalonate kinase"/>
    <property type="match status" value="1"/>
</dbReference>
<dbReference type="FunFam" id="3.30.70.890:FF:000003">
    <property type="entry name" value="Mevalonate kinase"/>
    <property type="match status" value="1"/>
</dbReference>
<dbReference type="Gene3D" id="3.30.230.10">
    <property type="match status" value="1"/>
</dbReference>
<dbReference type="Gene3D" id="3.30.70.890">
    <property type="entry name" value="GHMP kinase, C-terminal domain"/>
    <property type="match status" value="1"/>
</dbReference>
<dbReference type="InterPro" id="IPR013750">
    <property type="entry name" value="GHMP_kinase_C_dom"/>
</dbReference>
<dbReference type="InterPro" id="IPR036554">
    <property type="entry name" value="GHMP_kinase_C_sf"/>
</dbReference>
<dbReference type="InterPro" id="IPR006204">
    <property type="entry name" value="GHMP_kinase_N_dom"/>
</dbReference>
<dbReference type="InterPro" id="IPR006203">
    <property type="entry name" value="GHMP_knse_ATP-bd_CS"/>
</dbReference>
<dbReference type="InterPro" id="IPR006205">
    <property type="entry name" value="Mev_gal_kin"/>
</dbReference>
<dbReference type="InterPro" id="IPR020568">
    <property type="entry name" value="Ribosomal_Su5_D2-typ_SF"/>
</dbReference>
<dbReference type="InterPro" id="IPR014721">
    <property type="entry name" value="Ribsml_uS5_D2-typ_fold_subgr"/>
</dbReference>
<dbReference type="NCBIfam" id="TIGR00549">
    <property type="entry name" value="mevalon_kin"/>
    <property type="match status" value="1"/>
</dbReference>
<dbReference type="PANTHER" id="PTHR43290">
    <property type="entry name" value="MEVALONATE KINASE"/>
    <property type="match status" value="1"/>
</dbReference>
<dbReference type="PANTHER" id="PTHR43290:SF2">
    <property type="entry name" value="MEVALONATE KINASE"/>
    <property type="match status" value="1"/>
</dbReference>
<dbReference type="Pfam" id="PF08544">
    <property type="entry name" value="GHMP_kinases_C"/>
    <property type="match status" value="1"/>
</dbReference>
<dbReference type="Pfam" id="PF00288">
    <property type="entry name" value="GHMP_kinases_N"/>
    <property type="match status" value="1"/>
</dbReference>
<dbReference type="PRINTS" id="PR00959">
    <property type="entry name" value="MEVGALKINASE"/>
</dbReference>
<dbReference type="SUPFAM" id="SSF55060">
    <property type="entry name" value="GHMP Kinase, C-terminal domain"/>
    <property type="match status" value="1"/>
</dbReference>
<dbReference type="SUPFAM" id="SSF54211">
    <property type="entry name" value="Ribosomal protein S5 domain 2-like"/>
    <property type="match status" value="1"/>
</dbReference>
<dbReference type="PROSITE" id="PS00627">
    <property type="entry name" value="GHMP_KINASES_ATP"/>
    <property type="match status" value="1"/>
</dbReference>
<organism>
    <name type="scientific">Gibberella zeae (strain ATCC MYA-4620 / CBS 123657 / FGSC 9075 / NRRL 31084 / PH-1)</name>
    <name type="common">Wheat head blight fungus</name>
    <name type="synonym">Fusarium graminearum</name>
    <dbReference type="NCBI Taxonomy" id="229533"/>
    <lineage>
        <taxon>Eukaryota</taxon>
        <taxon>Fungi</taxon>
        <taxon>Dikarya</taxon>
        <taxon>Ascomycota</taxon>
        <taxon>Pezizomycotina</taxon>
        <taxon>Sordariomycetes</taxon>
        <taxon>Hypocreomycetidae</taxon>
        <taxon>Hypocreales</taxon>
        <taxon>Nectriaceae</taxon>
        <taxon>Fusarium</taxon>
    </lineage>
</organism>
<keyword id="KW-0067">ATP-binding</keyword>
<keyword id="KW-0963">Cytoplasm</keyword>
<keyword id="KW-0418">Kinase</keyword>
<keyword id="KW-0444">Lipid biosynthesis</keyword>
<keyword id="KW-0443">Lipid metabolism</keyword>
<keyword id="KW-0460">Magnesium</keyword>
<keyword id="KW-0479">Metal-binding</keyword>
<keyword id="KW-0547">Nucleotide-binding</keyword>
<keyword id="KW-1185">Reference proteome</keyword>
<keyword id="KW-0752">Steroid biosynthesis</keyword>
<keyword id="KW-0753">Steroid metabolism</keyword>
<keyword id="KW-0756">Sterol biosynthesis</keyword>
<keyword id="KW-1207">Sterol metabolism</keyword>
<keyword id="KW-0808">Transferase</keyword>
<name>ERG12_GIBZE</name>
<reference key="1">
    <citation type="journal article" date="2007" name="Science">
        <title>The Fusarium graminearum genome reveals a link between localized polymorphism and pathogen specialization.</title>
        <authorList>
            <person name="Cuomo C.A."/>
            <person name="Gueldener U."/>
            <person name="Xu J.-R."/>
            <person name="Trail F."/>
            <person name="Turgeon B.G."/>
            <person name="Di Pietro A."/>
            <person name="Walton J.D."/>
            <person name="Ma L.-J."/>
            <person name="Baker S.E."/>
            <person name="Rep M."/>
            <person name="Adam G."/>
            <person name="Antoniw J."/>
            <person name="Baldwin T."/>
            <person name="Calvo S.E."/>
            <person name="Chang Y.-L."/>
            <person name="DeCaprio D."/>
            <person name="Gale L.R."/>
            <person name="Gnerre S."/>
            <person name="Goswami R.S."/>
            <person name="Hammond-Kosack K."/>
            <person name="Harris L.J."/>
            <person name="Hilburn K."/>
            <person name="Kennell J.C."/>
            <person name="Kroken S."/>
            <person name="Magnuson J.K."/>
            <person name="Mannhaupt G."/>
            <person name="Mauceli E.W."/>
            <person name="Mewes H.-W."/>
            <person name="Mitterbauer R."/>
            <person name="Muehlbauer G."/>
            <person name="Muensterkoetter M."/>
            <person name="Nelson D."/>
            <person name="O'Donnell K."/>
            <person name="Ouellet T."/>
            <person name="Qi W."/>
            <person name="Quesneville H."/>
            <person name="Roncero M.I.G."/>
            <person name="Seong K.-Y."/>
            <person name="Tetko I.V."/>
            <person name="Urban M."/>
            <person name="Waalwijk C."/>
            <person name="Ward T.J."/>
            <person name="Yao J."/>
            <person name="Birren B.W."/>
            <person name="Kistler H.C."/>
        </authorList>
    </citation>
    <scope>NUCLEOTIDE SEQUENCE [LARGE SCALE GENOMIC DNA]</scope>
    <source>
        <strain>ATCC MYA-4620 / CBS 123657 / FGSC 9075 / NRRL 31084 / PH-1</strain>
    </source>
</reference>
<reference key="2">
    <citation type="journal article" date="2010" name="Nature">
        <title>Comparative genomics reveals mobile pathogenicity chromosomes in Fusarium.</title>
        <authorList>
            <person name="Ma L.-J."/>
            <person name="van der Does H.C."/>
            <person name="Borkovich K.A."/>
            <person name="Coleman J.J."/>
            <person name="Daboussi M.-J."/>
            <person name="Di Pietro A."/>
            <person name="Dufresne M."/>
            <person name="Freitag M."/>
            <person name="Grabherr M."/>
            <person name="Henrissat B."/>
            <person name="Houterman P.M."/>
            <person name="Kang S."/>
            <person name="Shim W.-B."/>
            <person name="Woloshuk C."/>
            <person name="Xie X."/>
            <person name="Xu J.-R."/>
            <person name="Antoniw J."/>
            <person name="Baker S.E."/>
            <person name="Bluhm B.H."/>
            <person name="Breakspear A."/>
            <person name="Brown D.W."/>
            <person name="Butchko R.A.E."/>
            <person name="Chapman S."/>
            <person name="Coulson R."/>
            <person name="Coutinho P.M."/>
            <person name="Danchin E.G.J."/>
            <person name="Diener A."/>
            <person name="Gale L.R."/>
            <person name="Gardiner D.M."/>
            <person name="Goff S."/>
            <person name="Hammond-Kosack K.E."/>
            <person name="Hilburn K."/>
            <person name="Hua-Van A."/>
            <person name="Jonkers W."/>
            <person name="Kazan K."/>
            <person name="Kodira C.D."/>
            <person name="Koehrsen M."/>
            <person name="Kumar L."/>
            <person name="Lee Y.-H."/>
            <person name="Li L."/>
            <person name="Manners J.M."/>
            <person name="Miranda-Saavedra D."/>
            <person name="Mukherjee M."/>
            <person name="Park G."/>
            <person name="Park J."/>
            <person name="Park S.-Y."/>
            <person name="Proctor R.H."/>
            <person name="Regev A."/>
            <person name="Ruiz-Roldan M.C."/>
            <person name="Sain D."/>
            <person name="Sakthikumar S."/>
            <person name="Sykes S."/>
            <person name="Schwartz D.C."/>
            <person name="Turgeon B.G."/>
            <person name="Wapinski I."/>
            <person name="Yoder O."/>
            <person name="Young S."/>
            <person name="Zeng Q."/>
            <person name="Zhou S."/>
            <person name="Galagan J."/>
            <person name="Cuomo C.A."/>
            <person name="Kistler H.C."/>
            <person name="Rep M."/>
        </authorList>
    </citation>
    <scope>GENOME REANNOTATION</scope>
    <source>
        <strain>ATCC MYA-4620 / CBS 123657 / FGSC 9075 / NRRL 31084 / PH-1</strain>
    </source>
</reference>
<reference key="3">
    <citation type="journal article" date="2015" name="BMC Genomics">
        <title>The completed genome sequence of the pathogenic ascomycete fungus Fusarium graminearum.</title>
        <authorList>
            <person name="King R."/>
            <person name="Urban M."/>
            <person name="Hammond-Kosack M.C.U."/>
            <person name="Hassani-Pak K."/>
            <person name="Hammond-Kosack K.E."/>
        </authorList>
    </citation>
    <scope>NUCLEOTIDE SEQUENCE [LARGE SCALE GENOMIC DNA]</scope>
    <source>
        <strain>ATCC MYA-4620 / CBS 123657 / FGSC 9075 / NRRL 31084 / PH-1</strain>
    </source>
</reference>
<reference key="4">
    <citation type="journal article" date="2019" name="Nat. Commun.">
        <title>A phosphorylated transcription factor regulates sterol biosynthesis in Fusarium graminearum.</title>
        <authorList>
            <person name="Liu Z."/>
            <person name="Jian Y."/>
            <person name="Chen Y."/>
            <person name="Kistler H.C."/>
            <person name="He P."/>
            <person name="Ma Z."/>
            <person name="Yin Y."/>
        </authorList>
    </citation>
    <scope>FUNCTION</scope>
</reference>
<gene>
    <name evidence="6" type="primary">ERG12</name>
    <name type="ORF">FG05912</name>
    <name type="ORF">FGRAMPH1_01T19063</name>
</gene>
<comment type="function">
    <text evidence="1 8">Mevalonate kinase; part of the second module of ergosterol biosynthesis pathway that includes the middle steps of the pathway (By similarity). ERG12 converts mevalonate into 5-phosphomevalonate (By similarity). The second module is carried out in the vacuole and involves the formation of farnesyl diphosphate, which is also an important intermediate in the biosynthesis of ubiquinone, dolichol, heme and prenylated proteins. Activity by the mevalonate kinase ERG12 (FG05912) first converts mevalonate into 5-phosphomevalonate. 5-phosphomevalonate is then further converted to 5-diphosphomevalonate by the phosphomevalonate kinase ERG8 (FG09764). The diphosphomevalonate decarboxylase ERG19 (FG10424) then produces isopentenyl diphosphate. The isopentenyl-diphosphate delta-isomerase IDI1 (FG09722) then catalyzes the 1,3-allylic rearrangement of the homoallylic substrate isopentenyl (IPP) to its highly electrophilic allylic isomer, dimethylallyl diphosphate (DMAPP). Finally the farnesyl diphosphate synthase ERG20 (FG06784) catalyzes the sequential condensation of isopentenyl pyrophosphate with dimethylallyl pyrophosphate, and then with the resultant geranylpyrophosphate to the ultimate product farnesyl pyrophosphate (Probable).</text>
</comment>
<comment type="catalytic activity">
    <reaction evidence="8">
        <text>(R)-mevalonate + ATP = (R)-5-phosphomevalonate + ADP + H(+)</text>
        <dbReference type="Rhea" id="RHEA:17065"/>
        <dbReference type="ChEBI" id="CHEBI:15378"/>
        <dbReference type="ChEBI" id="CHEBI:30616"/>
        <dbReference type="ChEBI" id="CHEBI:36464"/>
        <dbReference type="ChEBI" id="CHEBI:58146"/>
        <dbReference type="ChEBI" id="CHEBI:456216"/>
        <dbReference type="EC" id="2.7.1.36"/>
    </reaction>
    <physiologicalReaction direction="left-to-right" evidence="8">
        <dbReference type="Rhea" id="RHEA:17066"/>
    </physiologicalReaction>
</comment>
<comment type="cofactor">
    <cofactor evidence="2">
        <name>Mg(2+)</name>
        <dbReference type="ChEBI" id="CHEBI:18420"/>
    </cofactor>
</comment>
<comment type="pathway">
    <text evidence="8">Isoprenoid biosynthesis; isopentenyl diphosphate biosynthesis via mevalonate pathway; isopentenyl diphosphate from (R)-mevalonate: step 1/3.</text>
</comment>
<comment type="subunit">
    <text evidence="2">Homodimer.</text>
</comment>
<comment type="subcellular location">
    <subcellularLocation>
        <location evidence="4">Cytoplasm</location>
        <location evidence="4">Cytosol</location>
    </subcellularLocation>
</comment>
<comment type="similarity">
    <text evidence="7">Belongs to the GHMP kinase family. Mevalonate kinase subfamily.</text>
</comment>
<evidence type="ECO:0000250" key="1">
    <source>
        <dbReference type="UniProtKB" id="P07277"/>
    </source>
</evidence>
<evidence type="ECO:0000250" key="2">
    <source>
        <dbReference type="UniProtKB" id="P17256"/>
    </source>
</evidence>
<evidence type="ECO:0000250" key="3">
    <source>
        <dbReference type="UniProtKB" id="Q03426"/>
    </source>
</evidence>
<evidence type="ECO:0000250" key="4">
    <source>
        <dbReference type="UniProtKB" id="Q4WP25"/>
    </source>
</evidence>
<evidence type="ECO:0000256" key="5">
    <source>
        <dbReference type="SAM" id="MobiDB-lite"/>
    </source>
</evidence>
<evidence type="ECO:0000303" key="6">
    <source>
    </source>
</evidence>
<evidence type="ECO:0000305" key="7"/>
<evidence type="ECO:0000305" key="8">
    <source>
    </source>
</evidence>
<feature type="chain" id="PRO_0000454673" description="Mevalonate kinase ERG12">
    <location>
        <begin position="1"/>
        <end position="508"/>
    </location>
</feature>
<feature type="region of interest" description="Disordered" evidence="5">
    <location>
        <begin position="1"/>
        <end position="46"/>
    </location>
</feature>
<feature type="compositionally biased region" description="Low complexity" evidence="5">
    <location>
        <begin position="10"/>
        <end position="42"/>
    </location>
</feature>
<feature type="active site" description="Proton acceptor" evidence="3">
    <location>
        <position position="267"/>
    </location>
</feature>
<feature type="binding site" evidence="2">
    <location>
        <position position="68"/>
    </location>
    <ligand>
        <name>ATP</name>
        <dbReference type="ChEBI" id="CHEBI:30616"/>
    </ligand>
</feature>
<feature type="binding site" evidence="2">
    <location>
        <position position="200"/>
    </location>
    <ligand>
        <name>ATP</name>
        <dbReference type="ChEBI" id="CHEBI:30616"/>
    </ligand>
</feature>
<feature type="binding site" evidence="2">
    <location>
        <begin position="205"/>
        <end position="211"/>
    </location>
    <ligand>
        <name>ATP</name>
        <dbReference type="ChEBI" id="CHEBI:30616"/>
    </ligand>
</feature>
<feature type="binding site" evidence="2">
    <location>
        <position position="211"/>
    </location>
    <ligand>
        <name>Mg(2+)</name>
        <dbReference type="ChEBI" id="CHEBI:18420"/>
    </ligand>
</feature>
<feature type="binding site" evidence="2">
    <location>
        <position position="256"/>
    </location>
    <ligand>
        <name>Mg(2+)</name>
        <dbReference type="ChEBI" id="CHEBI:18420"/>
    </ligand>
</feature>
<protein>
    <recommendedName>
        <fullName evidence="6">Mevalonate kinase ERG12</fullName>
        <shortName evidence="7">MK</shortName>
        <shortName evidence="7">MvK</shortName>
        <ecNumber evidence="8">2.7.1.36</ecNumber>
    </recommendedName>
    <alternativeName>
        <fullName evidence="6">Ergosterol biosynthesis protein 12</fullName>
    </alternativeName>
</protein>
<proteinExistence type="inferred from homology"/>
<sequence length="508" mass="55166">MPPSNPAMVNGLNGSHANGNGNGHNHISDSGSETSGESSNGSGRRRMKLNRKMSSPMAPPFMVSAPGKVIVFGEHSVVHGKAAIAAAISLRSYLHVTTLSKSKRTVSLRFADIGLVHTWNIEDLPWEAFQQPSKKKSYYSLVTELDPDLVAAIQPHIEVVSPNHPEEIRRVHHSSVSAFLYLFLSLGSPSFPPCLYTLRSTIPIGAGLGSSASVSVCLASALLLQLRTLSGPHPDQPADEARLQVERINRWAFVSEMCIHGNPSGVDNTVATQGKAVVFQRTDYSKPPNVRPLWDFPELPLLLVDTRQAKSTAHEVAKVAKLKQTHPKLVNSILDAMDKVTDAASELIEETSFDNGSVEDLSKVGELMTINHGLLVSLGVSHPRLERVRELVDHEGIGWTKLTGAGGGGCSITLLRPDVPAEKLQKLEERLETENYAKFETTLGGDGIGVLWPAVLKNGTEEDEEGGMEIDLEKFLEAEGTEGVEKLVGVHGDTGEREGWKFWRVESQ</sequence>
<accession>I1RPE5</accession>